<feature type="signal peptide" evidence="1">
    <location>
        <begin position="1"/>
        <end position="23"/>
    </location>
</feature>
<feature type="chain" id="PRO_0000132929" description="Non-sulfated chondroitin lyase E66" evidence="1">
    <location>
        <begin position="24"/>
        <end position="704"/>
    </location>
</feature>
<feature type="active site" description="Proton acceptor" evidence="4">
    <location>
        <position position="236"/>
    </location>
</feature>
<feature type="active site" description="Proton acceptor" evidence="4">
    <location>
        <position position="291"/>
    </location>
</feature>
<feature type="active site" description="Proton donor" evidence="4">
    <location>
        <position position="299"/>
    </location>
</feature>
<feature type="site" description="Transition state stabilizer" evidence="4">
    <location>
        <position position="345"/>
    </location>
</feature>
<feature type="site" description="Important for catalytic activity" evidence="4">
    <location>
        <position position="395"/>
    </location>
</feature>
<feature type="mutagenesis site" description="Complete loss of non-sulfated chondroitin degrading activity." evidence="4">
    <original>N</original>
    <variation>A</variation>
    <location>
        <position position="236"/>
    </location>
</feature>
<feature type="mutagenesis site" description="Complete loss of non-sulfated chondroitin degrading activity." evidence="4">
    <original>H</original>
    <variation>A</variation>
    <location>
        <position position="291"/>
    </location>
</feature>
<feature type="mutagenesis site" description="Complete loss of non-sulfated chondroitin degrading activity." evidence="4">
    <original>Y</original>
    <variation>F</variation>
    <location>
        <position position="299"/>
    </location>
</feature>
<feature type="mutagenesis site" description="Complete loss of non-sulfated chondroitin degrading activity." evidence="4">
    <original>R</original>
    <variation>A</variation>
    <location>
        <position position="345"/>
    </location>
</feature>
<feature type="mutagenesis site" description="Complete loss of non-sulfated chondroitin degrading activity." evidence="4">
    <original>E</original>
    <variation>A</variation>
    <location>
        <position position="395"/>
    </location>
</feature>
<feature type="sequence conflict" description="In Ref. 1 and 2." evidence="6" ref="1 2">
    <original>I</original>
    <variation>M</variation>
    <location>
        <position position="249"/>
    </location>
</feature>
<feature type="helix" evidence="7">
    <location>
        <begin position="73"/>
        <end position="93"/>
    </location>
</feature>
<feature type="turn" evidence="7">
    <location>
        <begin position="107"/>
        <end position="109"/>
    </location>
</feature>
<feature type="turn" evidence="7">
    <location>
        <begin position="116"/>
        <end position="118"/>
    </location>
</feature>
<feature type="helix" evidence="7">
    <location>
        <begin position="120"/>
        <end position="138"/>
    </location>
</feature>
<feature type="turn" evidence="7">
    <location>
        <begin position="143"/>
        <end position="146"/>
    </location>
</feature>
<feature type="helix" evidence="7">
    <location>
        <begin position="148"/>
        <end position="164"/>
    </location>
</feature>
<feature type="strand" evidence="7">
    <location>
        <begin position="171"/>
        <end position="173"/>
    </location>
</feature>
<feature type="strand" evidence="7">
    <location>
        <begin position="175"/>
        <end position="177"/>
    </location>
</feature>
<feature type="turn" evidence="7">
    <location>
        <begin position="179"/>
        <end position="187"/>
    </location>
</feature>
<feature type="helix" evidence="7">
    <location>
        <begin position="188"/>
        <end position="199"/>
    </location>
</feature>
<feature type="turn" evidence="7">
    <location>
        <begin position="200"/>
        <end position="202"/>
    </location>
</feature>
<feature type="helix" evidence="7">
    <location>
        <begin position="206"/>
        <end position="220"/>
    </location>
</feature>
<feature type="strand" evidence="7">
    <location>
        <begin position="222"/>
        <end position="227"/>
    </location>
</feature>
<feature type="helix" evidence="7">
    <location>
        <begin position="234"/>
        <end position="250"/>
    </location>
</feature>
<feature type="helix" evidence="7">
    <location>
        <begin position="255"/>
        <end position="259"/>
    </location>
</feature>
<feature type="helix" evidence="7">
    <location>
        <begin position="262"/>
        <end position="272"/>
    </location>
</feature>
<feature type="strand" evidence="7">
    <location>
        <begin position="275"/>
        <end position="283"/>
    </location>
</feature>
<feature type="strand" evidence="7">
    <location>
        <begin position="288"/>
        <end position="290"/>
    </location>
</feature>
<feature type="turn" evidence="7">
    <location>
        <begin position="291"/>
        <end position="293"/>
    </location>
</feature>
<feature type="helix" evidence="7">
    <location>
        <begin position="297"/>
        <end position="303"/>
    </location>
</feature>
<feature type="helix" evidence="7">
    <location>
        <begin position="304"/>
        <end position="306"/>
    </location>
</feature>
<feature type="helix" evidence="7">
    <location>
        <begin position="307"/>
        <end position="314"/>
    </location>
</feature>
<feature type="helix" evidence="7">
    <location>
        <begin position="316"/>
        <end position="318"/>
    </location>
</feature>
<feature type="helix" evidence="7">
    <location>
        <begin position="321"/>
        <end position="329"/>
    </location>
</feature>
<feature type="helix" evidence="7">
    <location>
        <begin position="340"/>
        <end position="342"/>
    </location>
</feature>
<feature type="helix" evidence="7">
    <location>
        <begin position="354"/>
        <end position="356"/>
    </location>
</feature>
<feature type="strand" evidence="7">
    <location>
        <begin position="362"/>
        <end position="367"/>
    </location>
</feature>
<feature type="turn" evidence="7">
    <location>
        <begin position="368"/>
        <end position="371"/>
    </location>
</feature>
<feature type="strand" evidence="7">
    <location>
        <begin position="372"/>
        <end position="376"/>
    </location>
</feature>
<feature type="strand" evidence="7">
    <location>
        <begin position="378"/>
        <end position="385"/>
    </location>
</feature>
<feature type="strand" evidence="7">
    <location>
        <begin position="393"/>
        <end position="396"/>
    </location>
</feature>
<feature type="helix" evidence="7">
    <location>
        <begin position="404"/>
        <end position="409"/>
    </location>
</feature>
<feature type="strand" evidence="7">
    <location>
        <begin position="412"/>
        <end position="415"/>
    </location>
</feature>
<feature type="turn" evidence="7">
    <location>
        <begin position="425"/>
        <end position="429"/>
    </location>
</feature>
<feature type="strand" evidence="7">
    <location>
        <begin position="435"/>
        <end position="440"/>
    </location>
</feature>
<feature type="strand" evidence="7">
    <location>
        <begin position="448"/>
        <end position="451"/>
    </location>
</feature>
<feature type="strand" evidence="7">
    <location>
        <begin position="453"/>
        <end position="455"/>
    </location>
</feature>
<feature type="strand" evidence="7">
    <location>
        <begin position="458"/>
        <end position="466"/>
    </location>
</feature>
<feature type="strand" evidence="7">
    <location>
        <begin position="471"/>
        <end position="478"/>
    </location>
</feature>
<feature type="helix" evidence="7">
    <location>
        <begin position="480"/>
        <end position="482"/>
    </location>
</feature>
<feature type="strand" evidence="7">
    <location>
        <begin position="486"/>
        <end position="494"/>
    </location>
</feature>
<feature type="strand" evidence="7">
    <location>
        <begin position="497"/>
        <end position="506"/>
    </location>
</feature>
<feature type="strand" evidence="7">
    <location>
        <begin position="517"/>
        <end position="525"/>
    </location>
</feature>
<feature type="helix" evidence="7">
    <location>
        <begin position="535"/>
        <end position="541"/>
    </location>
</feature>
<feature type="turn" evidence="7">
    <location>
        <begin position="542"/>
        <end position="544"/>
    </location>
</feature>
<feature type="strand" evidence="7">
    <location>
        <begin position="549"/>
        <end position="551"/>
    </location>
</feature>
<feature type="strand" evidence="7">
    <location>
        <begin position="554"/>
        <end position="558"/>
    </location>
</feature>
<feature type="strand" evidence="7">
    <location>
        <begin position="570"/>
        <end position="572"/>
    </location>
</feature>
<feature type="strand" evidence="7">
    <location>
        <begin position="578"/>
        <end position="585"/>
    </location>
</feature>
<feature type="helix" evidence="7">
    <location>
        <begin position="587"/>
        <end position="591"/>
    </location>
</feature>
<feature type="strand" evidence="7">
    <location>
        <begin position="595"/>
        <end position="603"/>
    </location>
</feature>
<feature type="strand" evidence="7">
    <location>
        <begin position="611"/>
        <end position="614"/>
    </location>
</feature>
<feature type="strand" evidence="7">
    <location>
        <begin position="620"/>
        <end position="624"/>
    </location>
</feature>
<feature type="strand" evidence="7">
    <location>
        <begin position="626"/>
        <end position="634"/>
    </location>
</feature>
<feature type="strand" evidence="7">
    <location>
        <begin position="637"/>
        <end position="642"/>
    </location>
</feature>
<feature type="strand" evidence="7">
    <location>
        <begin position="645"/>
        <end position="650"/>
    </location>
</feature>
<feature type="strand" evidence="7">
    <location>
        <begin position="655"/>
        <end position="658"/>
    </location>
</feature>
<feature type="helix" evidence="7">
    <location>
        <begin position="659"/>
        <end position="668"/>
    </location>
</feature>
<feature type="strand" evidence="7">
    <location>
        <begin position="676"/>
        <end position="684"/>
    </location>
</feature>
<feature type="strand" evidence="7">
    <location>
        <begin position="687"/>
        <end position="691"/>
    </location>
</feature>
<feature type="strand" evidence="7">
    <location>
        <begin position="699"/>
        <end position="703"/>
    </location>
</feature>
<proteinExistence type="evidence at protein level"/>
<accession>Q00704</accession>
<accession>P41451</accession>
<reference key="1">
    <citation type="journal article" date="1988" name="J. Virol.">
        <title>Characterization of an early gene accelerating expression of late genes of the baculovirus Autographa californica nuclear polyhedrosis virus.</title>
        <authorList>
            <person name="Crawford A."/>
            <person name="Miller L.K."/>
        </authorList>
    </citation>
    <scope>NUCLEOTIDE SEQUENCE [GENOMIC DNA]</scope>
    <source>
        <strain>L1</strain>
    </source>
</reference>
<reference key="2">
    <citation type="journal article" date="1994" name="Virology">
        <title>Transcription, translation, and cellular localization of PDV-E66: a structural protein of the PDV envelope of Autographa californica nuclear polyhedrosis virus.</title>
        <authorList>
            <person name="Hong T."/>
            <person name="Braunagel S.C."/>
            <person name="Summers M.D."/>
        </authorList>
    </citation>
    <scope>NUCLEOTIDE SEQUENCE [GENOMIC DNA]</scope>
    <source>
        <strain>E2</strain>
    </source>
</reference>
<reference key="3">
    <citation type="journal article" date="1994" name="Virology">
        <title>The complete DNA sequence of Autographa californica nuclear polyhedrosis virus.</title>
        <authorList>
            <person name="Ayres M.D."/>
            <person name="Howard S.C."/>
            <person name="Kuzio J."/>
            <person name="Lopez-Ferber M."/>
            <person name="Possee R.D."/>
        </authorList>
    </citation>
    <scope>NUCLEOTIDE SEQUENCE [LARGE SCALE GENOMIC DNA]</scope>
    <source>
        <strain>C6</strain>
    </source>
</reference>
<reference key="4">
    <citation type="journal article" date="1997" name="Proc. Natl. Acad. Sci. U.S.A.">
        <title>N-terminal sequences from Autographa californica nuclear polyhedrosis virus envelope proteins ODV-E66 and ODV-E25 are sufficient to direct reporter proteins to the nuclear envelope, intranuclear microvesicles and the envelope of occlusion derived virus.</title>
        <authorList>
            <person name="Hong T."/>
            <person name="Summers M.D."/>
            <person name="Braunagel S.C."/>
        </authorList>
    </citation>
    <scope>SUBCELLULAR LOCATION</scope>
</reference>
<reference key="5">
    <citation type="journal article" date="2011" name="Virus Res.">
        <title>Autographa californica multiple nucleopolyhedrovirus odv-e66 is an essential gene required for oral infectivity.</title>
        <authorList>
            <person name="Xiang X."/>
            <person name="Chen L."/>
            <person name="Hu X."/>
            <person name="Yu S."/>
            <person name="Yang R."/>
            <person name="Wu X."/>
        </authorList>
    </citation>
    <scope>FUNCTION</scope>
</reference>
<reference key="6">
    <citation type="journal article" date="2011" name="J. Biol. Chem.">
        <title>Baculovirus envelope protein ODV-E66 is a novel chondroitinase with distinct substrate specificity.</title>
        <authorList>
            <person name="Sugiura N."/>
            <person name="Setoyama Y."/>
            <person name="Chiba M."/>
            <person name="Kimata K."/>
            <person name="Watanabe H."/>
        </authorList>
    </citation>
    <scope>FUNCTION</scope>
</reference>
<reference key="7">
    <citation type="journal article" date="2013" name="FEBS Lett.">
        <title>The crystal structure of novel chondroitin lyase ODV-E66, a baculovirus envelope protein.</title>
        <authorList>
            <person name="Kawaguchi Y."/>
            <person name="Sugiura N."/>
            <person name="Kimata K."/>
            <person name="Kimura M."/>
            <person name="Kakuta Y."/>
        </authorList>
    </citation>
    <scope>X-RAY CRYSTALLOGRAPHY (2.00 ANGSTROMS) OF 67-704</scope>
    <scope>MUTAGENESIS OF ASN-236; HIS-291; TYR-299; ARG-345 AND GLU-395</scope>
    <scope>ACTIVE SITE</scope>
</reference>
<protein>
    <recommendedName>
        <fullName>Non-sulfated chondroitin lyase E66</fullName>
        <shortName>ODV-E66</shortName>
        <ecNumber evidence="3">4.2.2.-</ecNumber>
    </recommendedName>
</protein>
<name>OE66_NPVAC</name>
<comment type="function">
    <text evidence="2 3">Component of the polyhedra envelope. Plays an essential role in oral infectivity. May digest, with its chondroitin lyase activity, the chondroitin sulfate barrier of the peritrophic matrix of the host midgut to facilitate viral infection in the epithelial cells.</text>
</comment>
<comment type="subcellular location">
    <subcellularLocation>
        <location evidence="5">Virion membrane</location>
    </subcellularLocation>
    <subcellularLocation>
        <location evidence="5">Host nucleus</location>
    </subcellularLocation>
    <subcellularLocation>
        <location evidence="5">Host cytoplasm</location>
    </subcellularLocation>
</comment>
<comment type="similarity">
    <text evidence="6">Belongs to the baculoviridae E66 family.</text>
</comment>
<organismHost>
    <name type="scientific">Lepidoptera</name>
    <name type="common">butterflies and moths</name>
    <dbReference type="NCBI Taxonomy" id="7088"/>
</organismHost>
<evidence type="ECO:0000255" key="1"/>
<evidence type="ECO:0000269" key="2">
    <source>
    </source>
</evidence>
<evidence type="ECO:0000269" key="3">
    <source>
    </source>
</evidence>
<evidence type="ECO:0000269" key="4">
    <source>
    </source>
</evidence>
<evidence type="ECO:0000269" key="5">
    <source>
    </source>
</evidence>
<evidence type="ECO:0000305" key="6"/>
<evidence type="ECO:0007829" key="7">
    <source>
        <dbReference type="PDB" id="3VSM"/>
    </source>
</evidence>
<organism>
    <name type="scientific">Autographa californica nuclear polyhedrosis virus</name>
    <name type="common">AcMNPV</name>
    <dbReference type="NCBI Taxonomy" id="46015"/>
    <lineage>
        <taxon>Viruses</taxon>
        <taxon>Viruses incertae sedis</taxon>
        <taxon>Naldaviricetes</taxon>
        <taxon>Lefavirales</taxon>
        <taxon>Baculoviridae</taxon>
        <taxon>Alphabaculovirus</taxon>
        <taxon>Alphabaculovirus aucalifornicae</taxon>
    </lineage>
</organism>
<dbReference type="EC" id="4.2.2.-" evidence="3"/>
<dbReference type="EMBL" id="M96360">
    <property type="protein sequence ID" value="AAA81587.1"/>
    <property type="molecule type" value="Genomic_DNA"/>
</dbReference>
<dbReference type="EMBL" id="L22858">
    <property type="protein sequence ID" value="AAA66676.1"/>
    <property type="molecule type" value="Genomic_DNA"/>
</dbReference>
<dbReference type="PIR" id="F72855">
    <property type="entry name" value="F72855"/>
</dbReference>
<dbReference type="PDB" id="3VSM">
    <property type="method" value="X-ray"/>
    <property type="resolution" value="2.00 A"/>
    <property type="chains" value="A=67-704"/>
</dbReference>
<dbReference type="PDB" id="3VSN">
    <property type="method" value="X-ray"/>
    <property type="resolution" value="2.00 A"/>
    <property type="chains" value="A=67-704"/>
</dbReference>
<dbReference type="PDBsum" id="3VSM"/>
<dbReference type="PDBsum" id="3VSN"/>
<dbReference type="SMR" id="Q00704"/>
<dbReference type="CAZy" id="PL23">
    <property type="family name" value="Polysaccharide Lyase Family 23"/>
</dbReference>
<dbReference type="KEGG" id="vg:1403878"/>
<dbReference type="OrthoDB" id="1386at10239"/>
<dbReference type="EvolutionaryTrace" id="Q00704"/>
<dbReference type="Proteomes" id="UP000008292">
    <property type="component" value="Segment"/>
</dbReference>
<dbReference type="GO" id="GO:0030430">
    <property type="term" value="C:host cell cytoplasm"/>
    <property type="evidence" value="ECO:0007669"/>
    <property type="project" value="UniProtKB-SubCell"/>
</dbReference>
<dbReference type="GO" id="GO:0042025">
    <property type="term" value="C:host cell nucleus"/>
    <property type="evidence" value="ECO:0007669"/>
    <property type="project" value="UniProtKB-SubCell"/>
</dbReference>
<dbReference type="GO" id="GO:0016020">
    <property type="term" value="C:membrane"/>
    <property type="evidence" value="ECO:0007669"/>
    <property type="project" value="UniProtKB-KW"/>
</dbReference>
<dbReference type="GO" id="GO:0019031">
    <property type="term" value="C:viral envelope"/>
    <property type="evidence" value="ECO:0007669"/>
    <property type="project" value="UniProtKB-KW"/>
</dbReference>
<dbReference type="GO" id="GO:0055036">
    <property type="term" value="C:virion membrane"/>
    <property type="evidence" value="ECO:0007669"/>
    <property type="project" value="UniProtKB-SubCell"/>
</dbReference>
<dbReference type="GO" id="GO:0016829">
    <property type="term" value="F:lyase activity"/>
    <property type="evidence" value="ECO:0007669"/>
    <property type="project" value="UniProtKB-KW"/>
</dbReference>
<dbReference type="Gene3D" id="2.60.40.4340">
    <property type="match status" value="1"/>
</dbReference>
<dbReference type="Gene3D" id="2.70.98.100">
    <property type="entry name" value="Baculovirus E66 occlusion-derived virus envelope protein, domain 2"/>
    <property type="match status" value="1"/>
</dbReference>
<dbReference type="Gene3D" id="1.50.10.100">
    <property type="entry name" value="Chondroitin AC/alginate lyase"/>
    <property type="match status" value="1"/>
</dbReference>
<dbReference type="InterPro" id="IPR043082">
    <property type="entry name" value="Baculo_ODV-E66_core"/>
</dbReference>
<dbReference type="InterPro" id="IPR008929">
    <property type="entry name" value="Chondroitin_lyas"/>
</dbReference>
<dbReference type="InterPro" id="IPR012970">
    <property type="entry name" value="Lyase_8_alpha_N"/>
</dbReference>
<dbReference type="InterPro" id="IPR006934">
    <property type="entry name" value="ODV-E66_C_baculovirus"/>
</dbReference>
<dbReference type="Pfam" id="PF04850">
    <property type="entry name" value="Baculo_E66"/>
    <property type="match status" value="1"/>
</dbReference>
<dbReference type="Pfam" id="PF08124">
    <property type="entry name" value="Lyase_8_N"/>
    <property type="match status" value="1"/>
</dbReference>
<dbReference type="SUPFAM" id="SSF48230">
    <property type="entry name" value="Chondroitin AC/alginate lyase"/>
    <property type="match status" value="1"/>
</dbReference>
<keyword id="KW-0002">3D-structure</keyword>
<keyword id="KW-1035">Host cytoplasm</keyword>
<keyword id="KW-1048">Host nucleus</keyword>
<keyword id="KW-0456">Lyase</keyword>
<keyword id="KW-0472">Membrane</keyword>
<keyword id="KW-1185">Reference proteome</keyword>
<keyword id="KW-0732">Signal</keyword>
<keyword id="KW-0261">Viral envelope protein</keyword>
<keyword id="KW-0946">Virion</keyword>
<sequence length="704" mass="79075">MSIVLIIVIVVIFLICFLYLSNSNNKNDANKNNAFIDLNPLPLNATTATTTTAVATTTTNNNNSIVAFRQNNIQELQNFERWFKNNLSYSFSQKAEKVVNPNRNWNDNTVFDNLSPWTSVPDFGTVCHTLIGYCVRYNNTSDTLYQNPELAYNLINGLRIICSKLPDPPPHQQAPWGPVADWYHFTITMPEVFMNITIVLNETQHYDEAASLTRYWLGLYLPTAVNSMGWHRTAGNSMRMGVPYTYSQILRGYSLAQIRQEQGIQEILNTIAFPYVTQGNGLHVDSIYIDHIDVRAYGYLINSYFTFAYYTYYFGDEVINTVGLTRAIENVGSPEGVVVPGVMSRNGTLYSNVIGNFITYPLAVHSADYSKVLTKLSKTYYGSVVGVTNRLAYYESDPTNNIQAPLWTMARRIWNRRGRIINYNANTVSFESGIILQSLNGIMRIPSGTTSTQSFRPTIGQTAIAKTDTAGAILVYAKFAEMNNLQFKSCTLFYDHGMFQLYYNIGVEPNSLNNTNGRVIVLSRDTSVNTNDLSFEAQRINNNNSSEGTTFNGVVCHRVPITNINVPSLTVRSPNSSVELVEQIISFQTMYTATASACYKLNVEGHSDSLRAFRVNSDENIYVNVGNGVKALFNYPWVMVKENNKVSFMSANEDTTIPFSVIMNSFTSIGEPALQYSPSNCFVYGNGFKLNNSTFDLQFIFEIV</sequence>
<gene>
    <name type="primary">P79</name>
</gene>